<evidence type="ECO:0000250" key="1">
    <source>
        <dbReference type="UniProtKB" id="P68448"/>
    </source>
</evidence>
<evidence type="ECO:0000305" key="2"/>
<organismHost>
    <name type="scientific">Homo sapiens</name>
    <name type="common">Human</name>
    <dbReference type="NCBI Taxonomy" id="9606"/>
</organismHost>
<organism>
    <name type="scientific">Vaccinia virus (strain Copenhagen)</name>
    <name type="common">VACV</name>
    <dbReference type="NCBI Taxonomy" id="10249"/>
    <lineage>
        <taxon>Viruses</taxon>
        <taxon>Varidnaviria</taxon>
        <taxon>Bamfordvirae</taxon>
        <taxon>Nucleocytoviricota</taxon>
        <taxon>Pokkesviricetes</taxon>
        <taxon>Chitovirales</taxon>
        <taxon>Poxviridae</taxon>
        <taxon>Chordopoxvirinae</taxon>
        <taxon>Orthopoxvirus</taxon>
        <taxon>Vaccinia virus</taxon>
    </lineage>
</organism>
<reference key="1">
    <citation type="journal article" date="1990" name="Virology">
        <title>The complete DNA sequence of vaccinia virus.</title>
        <authorList>
            <person name="Goebel S.J."/>
            <person name="Johnson G.P."/>
            <person name="Perkus M.E."/>
            <person name="Davis S.W."/>
            <person name="Winslow J.P."/>
            <person name="Paoletti E."/>
        </authorList>
    </citation>
    <scope>NUCLEOTIDE SEQUENCE [LARGE SCALE GENOMIC DNA]</scope>
</reference>
<reference key="2">
    <citation type="journal article" date="1990" name="Virology">
        <title>Appendix to 'The complete DNA sequence of vaccinia virus'.</title>
        <authorList>
            <person name="Goebel S.J."/>
            <person name="Johnson G.P."/>
            <person name="Perkus M.E."/>
            <person name="Davis S.W."/>
            <person name="Winslow J.P."/>
            <person name="Paoletti E."/>
        </authorList>
    </citation>
    <scope>NUCLEOTIDE SEQUENCE [LARGE SCALE GENOMIC DNA]</scope>
</reference>
<accession>P68449</accession>
<accession>P21051</accession>
<proteinExistence type="evidence at protein level"/>
<sequence length="129" mass="14899">MELVNIFLETDAGRVKFAIKNTDDVCASELINKFVELLSEYIHIDQSEFYLVVKDKDIFYFKCDRGSISIVNNEFYVFDEPLLFVKDFTNVTGVEFIVTETMPCRIIPKNNHAVISVVTNHKFYNGLSL</sequence>
<protein>
    <recommendedName>
        <fullName>Core protein OPG073</fullName>
    </recommendedName>
    <alternativeName>
        <fullName>Protein E11</fullName>
    </alternativeName>
</protein>
<feature type="chain" id="PRO_0000099468" description="Core protein OPG073">
    <location>
        <begin position="1"/>
        <end position="129"/>
    </location>
</feature>
<comment type="subcellular location">
    <subcellularLocation>
        <location evidence="1">Virion</location>
    </subcellularLocation>
    <text evidence="1">Found in the core of mature virions.</text>
</comment>
<comment type="induction">
    <text evidence="1">Expressed in the intermediate phase of the viral replicative cycle.</text>
</comment>
<comment type="similarity">
    <text evidence="2">Belongs to the orthopoxvirus OPG073 family.</text>
</comment>
<dbReference type="EMBL" id="M35027">
    <property type="protein sequence ID" value="AAA48052.1"/>
    <property type="molecule type" value="Genomic_DNA"/>
</dbReference>
<dbReference type="PIR" id="F42509">
    <property type="entry name" value="F42509"/>
</dbReference>
<dbReference type="PDB" id="8RQK">
    <property type="method" value="EM"/>
    <property type="resolution" value="2.65 A"/>
    <property type="chains" value="Q/R=1-129"/>
</dbReference>
<dbReference type="PDBsum" id="8RQK"/>
<dbReference type="EMDB" id="EMD-19442"/>
<dbReference type="SMR" id="P68449"/>
<dbReference type="Proteomes" id="UP000008269">
    <property type="component" value="Segment"/>
</dbReference>
<dbReference type="GO" id="GO:0044423">
    <property type="term" value="C:virion component"/>
    <property type="evidence" value="ECO:0007669"/>
    <property type="project" value="UniProtKB-KW"/>
</dbReference>
<dbReference type="InterPro" id="IPR009201">
    <property type="entry name" value="Virion_core"/>
</dbReference>
<dbReference type="Pfam" id="PF06138">
    <property type="entry name" value="Chordopox_E11"/>
    <property type="match status" value="1"/>
</dbReference>
<dbReference type="PIRSF" id="PIRSF015797">
    <property type="entry name" value="Virion_core"/>
    <property type="match status" value="1"/>
</dbReference>
<name>PG073_VACCC</name>
<gene>
    <name type="primary">OPG073</name>
    <name type="ORF">E11L</name>
</gene>
<keyword id="KW-0002">3D-structure</keyword>
<keyword id="KW-1185">Reference proteome</keyword>
<keyword id="KW-0946">Virion</keyword>